<sequence>MANYFNTLNLRQQLAQLGKCRFMGRDEFADGASYLQGKKVVIVGCGAQGLNQGLNMRDSGLDISYALRKEAIAEKRASWRKATENGFKVGTYEELIPQADLVVNLTPDKQHSDVVRSVQPLMKDGAALGYSHGFNIVEVGEQIRKDITVVMVAPKCPGTEVREEYKRGFGVPTLIAVHPENDPKGEGMAIAKAWAAATGGHRAGVLESSFVAEVKSDLMGEQTILCGMLQAGSLLCFDKLVAEGTDPAYAEKLIQFGWETITEALKQGGITLMMDRLSNPAKLRAYALSEQLKEIMAPLFQKHMDDIISGEFSSGMMADWANDDKKLLTWREETGKTAFETAPQFEGKIGEQEYFDKGVLMIAMVKAGVELAFETMVDSGIIEESAYYESLHELPLIANTIARKRLYEMNVVISDTAEYGNYLFSYACVPLLKPFIAELQPGDLGSAIPEGAVDNAQLRDVNDAIRSHAIEQVGKKLRGYMTDMKRIAVAG</sequence>
<protein>
    <recommendedName>
        <fullName evidence="1">Ketol-acid reductoisomerase (NADP(+))</fullName>
        <shortName evidence="1">KARI</shortName>
        <ecNumber evidence="1">1.1.1.86</ecNumber>
    </recommendedName>
    <alternativeName>
        <fullName evidence="1">Acetohydroxy-acid isomeroreductase</fullName>
        <shortName evidence="1">AHIR</shortName>
    </alternativeName>
    <alternativeName>
        <fullName evidence="1">Alpha-keto-beta-hydroxylacyl reductoisomerase</fullName>
    </alternativeName>
    <alternativeName>
        <fullName evidence="1">Ketol-acid reductoisomerase type 2</fullName>
    </alternativeName>
    <alternativeName>
        <fullName evidence="1">Ketol-acid reductoisomerase type II</fullName>
    </alternativeName>
</protein>
<accession>B5EZ33</accession>
<feature type="chain" id="PRO_1000190984" description="Ketol-acid reductoisomerase (NADP(+))">
    <location>
        <begin position="1"/>
        <end position="491"/>
    </location>
</feature>
<feature type="domain" description="KARI N-terminal Rossmann" evidence="2">
    <location>
        <begin position="15"/>
        <end position="208"/>
    </location>
</feature>
<feature type="domain" description="KARI C-terminal knotted 1" evidence="3">
    <location>
        <begin position="209"/>
        <end position="344"/>
    </location>
</feature>
<feature type="domain" description="KARI C-terminal knotted 2" evidence="3">
    <location>
        <begin position="345"/>
        <end position="484"/>
    </location>
</feature>
<feature type="active site" evidence="1">
    <location>
        <position position="132"/>
    </location>
</feature>
<feature type="binding site" evidence="1">
    <location>
        <begin position="45"/>
        <end position="48"/>
    </location>
    <ligand>
        <name>NADP(+)</name>
        <dbReference type="ChEBI" id="CHEBI:58349"/>
    </ligand>
</feature>
<feature type="binding site" evidence="1">
    <location>
        <position position="68"/>
    </location>
    <ligand>
        <name>NADP(+)</name>
        <dbReference type="ChEBI" id="CHEBI:58349"/>
    </ligand>
</feature>
<feature type="binding site" evidence="1">
    <location>
        <position position="76"/>
    </location>
    <ligand>
        <name>NADP(+)</name>
        <dbReference type="ChEBI" id="CHEBI:58349"/>
    </ligand>
</feature>
<feature type="binding site" evidence="1">
    <location>
        <position position="78"/>
    </location>
    <ligand>
        <name>NADP(+)</name>
        <dbReference type="ChEBI" id="CHEBI:58349"/>
    </ligand>
</feature>
<feature type="binding site" evidence="1">
    <location>
        <begin position="108"/>
        <end position="110"/>
    </location>
    <ligand>
        <name>NADP(+)</name>
        <dbReference type="ChEBI" id="CHEBI:58349"/>
    </ligand>
</feature>
<feature type="binding site" evidence="1">
    <location>
        <position position="158"/>
    </location>
    <ligand>
        <name>NADP(+)</name>
        <dbReference type="ChEBI" id="CHEBI:58349"/>
    </ligand>
</feature>
<feature type="binding site" evidence="1">
    <location>
        <position position="217"/>
    </location>
    <ligand>
        <name>Mg(2+)</name>
        <dbReference type="ChEBI" id="CHEBI:18420"/>
        <label>1</label>
    </ligand>
</feature>
<feature type="binding site" evidence="1">
    <location>
        <position position="217"/>
    </location>
    <ligand>
        <name>Mg(2+)</name>
        <dbReference type="ChEBI" id="CHEBI:18420"/>
        <label>2</label>
    </ligand>
</feature>
<feature type="binding site" evidence="1">
    <location>
        <position position="221"/>
    </location>
    <ligand>
        <name>Mg(2+)</name>
        <dbReference type="ChEBI" id="CHEBI:18420"/>
        <label>1</label>
    </ligand>
</feature>
<feature type="binding site" evidence="1">
    <location>
        <position position="389"/>
    </location>
    <ligand>
        <name>Mg(2+)</name>
        <dbReference type="ChEBI" id="CHEBI:18420"/>
        <label>2</label>
    </ligand>
</feature>
<feature type="binding site" evidence="1">
    <location>
        <position position="393"/>
    </location>
    <ligand>
        <name>Mg(2+)</name>
        <dbReference type="ChEBI" id="CHEBI:18420"/>
        <label>2</label>
    </ligand>
</feature>
<feature type="binding site" evidence="1">
    <location>
        <position position="414"/>
    </location>
    <ligand>
        <name>substrate</name>
    </ligand>
</feature>
<evidence type="ECO:0000255" key="1">
    <source>
        <dbReference type="HAMAP-Rule" id="MF_00435"/>
    </source>
</evidence>
<evidence type="ECO:0000255" key="2">
    <source>
        <dbReference type="PROSITE-ProRule" id="PRU01197"/>
    </source>
</evidence>
<evidence type="ECO:0000255" key="3">
    <source>
        <dbReference type="PROSITE-ProRule" id="PRU01198"/>
    </source>
</evidence>
<gene>
    <name evidence="1" type="primary">ilvC</name>
    <name type="ordered locus">SeAg_B4134</name>
</gene>
<keyword id="KW-0028">Amino-acid biosynthesis</keyword>
<keyword id="KW-0100">Branched-chain amino acid biosynthesis</keyword>
<keyword id="KW-0460">Magnesium</keyword>
<keyword id="KW-0479">Metal-binding</keyword>
<keyword id="KW-0521">NADP</keyword>
<keyword id="KW-0560">Oxidoreductase</keyword>
<keyword id="KW-0677">Repeat</keyword>
<organism>
    <name type="scientific">Salmonella agona (strain SL483)</name>
    <dbReference type="NCBI Taxonomy" id="454166"/>
    <lineage>
        <taxon>Bacteria</taxon>
        <taxon>Pseudomonadati</taxon>
        <taxon>Pseudomonadota</taxon>
        <taxon>Gammaproteobacteria</taxon>
        <taxon>Enterobacterales</taxon>
        <taxon>Enterobacteriaceae</taxon>
        <taxon>Salmonella</taxon>
    </lineage>
</organism>
<dbReference type="EC" id="1.1.1.86" evidence="1"/>
<dbReference type="EMBL" id="CP001138">
    <property type="protein sequence ID" value="ACH50714.1"/>
    <property type="molecule type" value="Genomic_DNA"/>
</dbReference>
<dbReference type="RefSeq" id="WP_000024941.1">
    <property type="nucleotide sequence ID" value="NC_011149.1"/>
</dbReference>
<dbReference type="SMR" id="B5EZ33"/>
<dbReference type="KEGG" id="sea:SeAg_B4134"/>
<dbReference type="HOGENOM" id="CLU_551905_0_0_6"/>
<dbReference type="UniPathway" id="UPA00047">
    <property type="reaction ID" value="UER00056"/>
</dbReference>
<dbReference type="UniPathway" id="UPA00049">
    <property type="reaction ID" value="UER00060"/>
</dbReference>
<dbReference type="Proteomes" id="UP000008819">
    <property type="component" value="Chromosome"/>
</dbReference>
<dbReference type="GO" id="GO:0005829">
    <property type="term" value="C:cytosol"/>
    <property type="evidence" value="ECO:0007669"/>
    <property type="project" value="TreeGrafter"/>
</dbReference>
<dbReference type="GO" id="GO:0004455">
    <property type="term" value="F:ketol-acid reductoisomerase activity"/>
    <property type="evidence" value="ECO:0007669"/>
    <property type="project" value="UniProtKB-UniRule"/>
</dbReference>
<dbReference type="GO" id="GO:0000287">
    <property type="term" value="F:magnesium ion binding"/>
    <property type="evidence" value="ECO:0007669"/>
    <property type="project" value="UniProtKB-UniRule"/>
</dbReference>
<dbReference type="GO" id="GO:0009097">
    <property type="term" value="P:isoleucine biosynthetic process"/>
    <property type="evidence" value="ECO:0007669"/>
    <property type="project" value="UniProtKB-UniRule"/>
</dbReference>
<dbReference type="GO" id="GO:0009099">
    <property type="term" value="P:L-valine biosynthetic process"/>
    <property type="evidence" value="ECO:0007669"/>
    <property type="project" value="UniProtKB-UniRule"/>
</dbReference>
<dbReference type="FunFam" id="1.10.1040.10:FF:000007">
    <property type="entry name" value="Ketol-acid reductoisomerase (NADP(+))"/>
    <property type="match status" value="1"/>
</dbReference>
<dbReference type="FunFam" id="3.40.50.720:FF:000043">
    <property type="entry name" value="Ketol-acid reductoisomerase (NADP(+))"/>
    <property type="match status" value="1"/>
</dbReference>
<dbReference type="Gene3D" id="1.10.1040.10">
    <property type="entry name" value="N-(1-d-carboxylethyl)-l-norvaline Dehydrogenase, domain 2"/>
    <property type="match status" value="1"/>
</dbReference>
<dbReference type="Gene3D" id="3.40.50.720">
    <property type="entry name" value="NAD(P)-binding Rossmann-like Domain"/>
    <property type="match status" value="1"/>
</dbReference>
<dbReference type="HAMAP" id="MF_00435">
    <property type="entry name" value="IlvC"/>
    <property type="match status" value="1"/>
</dbReference>
<dbReference type="InterPro" id="IPR008927">
    <property type="entry name" value="6-PGluconate_DH-like_C_sf"/>
</dbReference>
<dbReference type="InterPro" id="IPR013328">
    <property type="entry name" value="6PGD_dom2"/>
</dbReference>
<dbReference type="InterPro" id="IPR013023">
    <property type="entry name" value="KARI"/>
</dbReference>
<dbReference type="InterPro" id="IPR000506">
    <property type="entry name" value="KARI_C"/>
</dbReference>
<dbReference type="InterPro" id="IPR013116">
    <property type="entry name" value="KARI_N"/>
</dbReference>
<dbReference type="InterPro" id="IPR036291">
    <property type="entry name" value="NAD(P)-bd_dom_sf"/>
</dbReference>
<dbReference type="NCBIfam" id="TIGR00465">
    <property type="entry name" value="ilvC"/>
    <property type="match status" value="1"/>
</dbReference>
<dbReference type="NCBIfam" id="NF003557">
    <property type="entry name" value="PRK05225.1"/>
    <property type="match status" value="1"/>
</dbReference>
<dbReference type="PANTHER" id="PTHR21371">
    <property type="entry name" value="KETOL-ACID REDUCTOISOMERASE, MITOCHONDRIAL"/>
    <property type="match status" value="1"/>
</dbReference>
<dbReference type="PANTHER" id="PTHR21371:SF1">
    <property type="entry name" value="KETOL-ACID REDUCTOISOMERASE, MITOCHONDRIAL"/>
    <property type="match status" value="1"/>
</dbReference>
<dbReference type="Pfam" id="PF01450">
    <property type="entry name" value="KARI_C"/>
    <property type="match status" value="2"/>
</dbReference>
<dbReference type="Pfam" id="PF07991">
    <property type="entry name" value="KARI_N"/>
    <property type="match status" value="1"/>
</dbReference>
<dbReference type="SUPFAM" id="SSF48179">
    <property type="entry name" value="6-phosphogluconate dehydrogenase C-terminal domain-like"/>
    <property type="match status" value="2"/>
</dbReference>
<dbReference type="SUPFAM" id="SSF51735">
    <property type="entry name" value="NAD(P)-binding Rossmann-fold domains"/>
    <property type="match status" value="1"/>
</dbReference>
<dbReference type="PROSITE" id="PS51851">
    <property type="entry name" value="KARI_C"/>
    <property type="match status" value="2"/>
</dbReference>
<dbReference type="PROSITE" id="PS51850">
    <property type="entry name" value="KARI_N"/>
    <property type="match status" value="1"/>
</dbReference>
<comment type="function">
    <text evidence="1">Involved in the biosynthesis of branched-chain amino acids (BCAA). Catalyzes an alkyl-migration followed by a ketol-acid reduction of (S)-2-acetolactate (S2AL) to yield (R)-2,3-dihydroxy-isovalerate. In the isomerase reaction, S2AL is rearranged via a Mg-dependent methyl migration to produce 3-hydroxy-3-methyl-2-ketobutyrate (HMKB). In the reductase reaction, this 2-ketoacid undergoes a metal-dependent reduction by NADPH to yield (R)-2,3-dihydroxy-isovalerate.</text>
</comment>
<comment type="catalytic activity">
    <reaction evidence="1">
        <text>(2R)-2,3-dihydroxy-3-methylbutanoate + NADP(+) = (2S)-2-acetolactate + NADPH + H(+)</text>
        <dbReference type="Rhea" id="RHEA:22068"/>
        <dbReference type="ChEBI" id="CHEBI:15378"/>
        <dbReference type="ChEBI" id="CHEBI:49072"/>
        <dbReference type="ChEBI" id="CHEBI:57783"/>
        <dbReference type="ChEBI" id="CHEBI:58349"/>
        <dbReference type="ChEBI" id="CHEBI:58476"/>
        <dbReference type="EC" id="1.1.1.86"/>
    </reaction>
</comment>
<comment type="catalytic activity">
    <reaction evidence="1">
        <text>(2R,3R)-2,3-dihydroxy-3-methylpentanoate + NADP(+) = (S)-2-ethyl-2-hydroxy-3-oxobutanoate + NADPH + H(+)</text>
        <dbReference type="Rhea" id="RHEA:13493"/>
        <dbReference type="ChEBI" id="CHEBI:15378"/>
        <dbReference type="ChEBI" id="CHEBI:49256"/>
        <dbReference type="ChEBI" id="CHEBI:49258"/>
        <dbReference type="ChEBI" id="CHEBI:57783"/>
        <dbReference type="ChEBI" id="CHEBI:58349"/>
        <dbReference type="EC" id="1.1.1.86"/>
    </reaction>
</comment>
<comment type="cofactor">
    <cofactor evidence="1">
        <name>Mg(2+)</name>
        <dbReference type="ChEBI" id="CHEBI:18420"/>
    </cofactor>
    <text evidence="1">Binds 2 magnesium ions per subunit.</text>
</comment>
<comment type="pathway">
    <text evidence="1">Amino-acid biosynthesis; L-isoleucine biosynthesis; L-isoleucine from 2-oxobutanoate: step 2/4.</text>
</comment>
<comment type="pathway">
    <text evidence="1">Amino-acid biosynthesis; L-valine biosynthesis; L-valine from pyruvate: step 2/4.</text>
</comment>
<comment type="similarity">
    <text evidence="1">Belongs to the ketol-acid reductoisomerase family.</text>
</comment>
<name>ILVC_SALA4</name>
<reference key="1">
    <citation type="journal article" date="2011" name="J. Bacteriol.">
        <title>Comparative genomics of 28 Salmonella enterica isolates: evidence for CRISPR-mediated adaptive sublineage evolution.</title>
        <authorList>
            <person name="Fricke W.F."/>
            <person name="Mammel M.K."/>
            <person name="McDermott P.F."/>
            <person name="Tartera C."/>
            <person name="White D.G."/>
            <person name="Leclerc J.E."/>
            <person name="Ravel J."/>
            <person name="Cebula T.A."/>
        </authorList>
    </citation>
    <scope>NUCLEOTIDE SEQUENCE [LARGE SCALE GENOMIC DNA]</scope>
    <source>
        <strain>SL483</strain>
    </source>
</reference>
<proteinExistence type="inferred from homology"/>